<gene>
    <name evidence="6" type="primary">pbs-5</name>
    <name evidence="6" type="ORF">K05C4.1</name>
</gene>
<comment type="function">
    <text evidence="1 3">Component of the 20S core proteasome complex involved in the proteolytic degradation of most intracellular proteins (PubMed:27528192). This complex plays numerous essential roles within the cell by associating with different regulatory particles (By similarity). Associated with two 19S regulatory particles, forms the 26S proteasome and thus participates in the ATP-dependent degradation of ubiquitinated proteins (By similarity). The 26S proteasome plays a key role in the maintenance of protein homeostasis by removing misfolded or damaged proteins that could impair cellular functions, and by removing proteins whose functions are no longer required (By similarity).</text>
</comment>
<comment type="catalytic activity">
    <reaction evidence="1">
        <text>Cleavage of peptide bonds with very broad specificity.</text>
        <dbReference type="EC" id="3.4.25.1"/>
    </reaction>
</comment>
<comment type="subunit">
    <text evidence="1">The 26S proteasome consists of a 20S proteasome core and two 19S regulatory subunits. The 20S proteasome core is composed of 28 subunits that are arranged in four stacked rings, resulting in a barrel-shaped structure. The two end rings are each formed by seven alpha subunits, and the two central rings are each formed by seven beta subunits. The catalytic chamber with the active sites is on the inside of the barrel.</text>
</comment>
<comment type="subcellular location">
    <subcellularLocation>
        <location evidence="2">Cytoplasm</location>
    </subcellularLocation>
    <subcellularLocation>
        <location evidence="1">Nucleus</location>
    </subcellularLocation>
</comment>
<comment type="disruption phenotype">
    <text evidence="3">No visible phenotype. Constitutive skn-1-dependent expression of the proteasomal subunit rpt-3. Double knockout with ddi-1, sel-1, sel-9, png-1 or skn-1a results in failed expression of the proteasomal subunit rpt-3.</text>
</comment>
<comment type="similarity">
    <text evidence="2">Belongs to the peptidase T1B family.</text>
</comment>
<proteinExistence type="inferred from homology"/>
<evidence type="ECO:0000250" key="1">
    <source>
        <dbReference type="UniProtKB" id="P28074"/>
    </source>
</evidence>
<evidence type="ECO:0000255" key="2">
    <source>
        <dbReference type="PROSITE-ProRule" id="PRU00809"/>
    </source>
</evidence>
<evidence type="ECO:0000269" key="3">
    <source>
    </source>
</evidence>
<evidence type="ECO:0000305" key="4"/>
<evidence type="ECO:0000312" key="5">
    <source>
        <dbReference type="Proteomes" id="UP000001940"/>
    </source>
</evidence>
<evidence type="ECO:0000312" key="6">
    <source>
        <dbReference type="WormBase" id="K05C4.1"/>
    </source>
</evidence>
<keyword id="KW-0963">Cytoplasm</keyword>
<keyword id="KW-0378">Hydrolase</keyword>
<keyword id="KW-0539">Nucleus</keyword>
<keyword id="KW-0645">Protease</keyword>
<keyword id="KW-0647">Proteasome</keyword>
<keyword id="KW-1185">Reference proteome</keyword>
<keyword id="KW-0888">Threonine protease</keyword>
<keyword id="KW-0865">Zymogen</keyword>
<feature type="chain" id="PRO_0000442337" description="Proteasome subunit pbs-5" evidence="4">
    <location>
        <begin position="1"/>
        <end position="284"/>
    </location>
</feature>
<feature type="propeptide" id="PRO_0000442336" description="Removed in mature form" evidence="1">
    <location>
        <begin position="1"/>
        <end position="64"/>
    </location>
</feature>
<feature type="active site" description="Nucleophile" evidence="1">
    <location>
        <position position="65"/>
    </location>
</feature>
<dbReference type="EC" id="3.4.25.1" evidence="1"/>
<dbReference type="EMBL" id="BX284601">
    <property type="protein sequence ID" value="CAB04567.1"/>
    <property type="molecule type" value="Genomic_DNA"/>
</dbReference>
<dbReference type="PIR" id="T23336">
    <property type="entry name" value="T23336"/>
</dbReference>
<dbReference type="RefSeq" id="NP_493558.1">
    <property type="nucleotide sequence ID" value="NM_061157.5"/>
</dbReference>
<dbReference type="SMR" id="Q9XUV0"/>
<dbReference type="DIP" id="DIP-25961N"/>
<dbReference type="FunCoup" id="Q9XUV0">
    <property type="interactions" value="927"/>
</dbReference>
<dbReference type="IntAct" id="Q9XUV0">
    <property type="interactions" value="4"/>
</dbReference>
<dbReference type="STRING" id="6239.K05C4.1.1"/>
<dbReference type="MEROPS" id="T01.A09"/>
<dbReference type="PaxDb" id="6239-K05C4.1"/>
<dbReference type="PeptideAtlas" id="Q9XUV0"/>
<dbReference type="EnsemblMetazoa" id="K05C4.1.1">
    <property type="protein sequence ID" value="K05C4.1.1"/>
    <property type="gene ID" value="WBGene00003951"/>
</dbReference>
<dbReference type="GeneID" id="173334"/>
<dbReference type="KEGG" id="cel:CELE_K05C4.1"/>
<dbReference type="UCSC" id="K05C4.1.1">
    <property type="organism name" value="c. elegans"/>
</dbReference>
<dbReference type="AGR" id="WB:WBGene00003951"/>
<dbReference type="CTD" id="173334"/>
<dbReference type="WormBase" id="K05C4.1">
    <property type="protein sequence ID" value="CE19969"/>
    <property type="gene ID" value="WBGene00003951"/>
    <property type="gene designation" value="pbs-5"/>
</dbReference>
<dbReference type="eggNOG" id="KOG0175">
    <property type="taxonomic scope" value="Eukaryota"/>
</dbReference>
<dbReference type="GeneTree" id="ENSGT00940000166784"/>
<dbReference type="HOGENOM" id="CLU_035750_7_1_1"/>
<dbReference type="InParanoid" id="Q9XUV0"/>
<dbReference type="OMA" id="NLGMAMQ"/>
<dbReference type="OrthoDB" id="37597at2759"/>
<dbReference type="PhylomeDB" id="Q9XUV0"/>
<dbReference type="Reactome" id="R-CEL-1234176">
    <property type="pathway name" value="Oxygen-dependent proline hydroxylation of Hypoxia-inducible Factor Alpha"/>
</dbReference>
<dbReference type="Reactome" id="R-CEL-1236978">
    <property type="pathway name" value="Cross-presentation of soluble exogenous antigens (endosomes)"/>
</dbReference>
<dbReference type="Reactome" id="R-CEL-187577">
    <property type="pathway name" value="SCF(Skp2)-mediated degradation of p27/p21"/>
</dbReference>
<dbReference type="Reactome" id="R-CEL-195253">
    <property type="pathway name" value="Degradation of beta-catenin by the destruction complex"/>
</dbReference>
<dbReference type="Reactome" id="R-CEL-349425">
    <property type="pathway name" value="Autodegradation of the E3 ubiquitin ligase COP1"/>
</dbReference>
<dbReference type="Reactome" id="R-CEL-350562">
    <property type="pathway name" value="Regulation of ornithine decarboxylase (ODC)"/>
</dbReference>
<dbReference type="Reactome" id="R-CEL-382556">
    <property type="pathway name" value="ABC-family proteins mediated transport"/>
</dbReference>
<dbReference type="Reactome" id="R-CEL-4608870">
    <property type="pathway name" value="Asymmetric localization of PCP proteins"/>
</dbReference>
<dbReference type="Reactome" id="R-CEL-4641258">
    <property type="pathway name" value="Degradation of DVL"/>
</dbReference>
<dbReference type="Reactome" id="R-CEL-5632684">
    <property type="pathway name" value="Hedgehog 'on' state"/>
</dbReference>
<dbReference type="Reactome" id="R-CEL-5687128">
    <property type="pathway name" value="MAPK6/MAPK4 signaling"/>
</dbReference>
<dbReference type="Reactome" id="R-CEL-5689603">
    <property type="pathway name" value="UCH proteinases"/>
</dbReference>
<dbReference type="Reactome" id="R-CEL-5689880">
    <property type="pathway name" value="Ub-specific processing proteases"/>
</dbReference>
<dbReference type="Reactome" id="R-CEL-68949">
    <property type="pathway name" value="Orc1 removal from chromatin"/>
</dbReference>
<dbReference type="Reactome" id="R-CEL-69017">
    <property type="pathway name" value="CDK-mediated phosphorylation and removal of Cdc6"/>
</dbReference>
<dbReference type="Reactome" id="R-CEL-69601">
    <property type="pathway name" value="Ubiquitin Mediated Degradation of Phosphorylated Cdc25A"/>
</dbReference>
<dbReference type="Reactome" id="R-CEL-75815">
    <property type="pathway name" value="Ubiquitin-dependent degradation of Cyclin D"/>
</dbReference>
<dbReference type="Reactome" id="R-CEL-8854050">
    <property type="pathway name" value="FBXL7 down-regulates AURKA during mitotic entry and in early mitosis"/>
</dbReference>
<dbReference type="Reactome" id="R-CEL-8939902">
    <property type="pathway name" value="Regulation of RUNX2 expression and activity"/>
</dbReference>
<dbReference type="Reactome" id="R-CEL-8941858">
    <property type="pathway name" value="Regulation of RUNX3 expression and activity"/>
</dbReference>
<dbReference type="Reactome" id="R-CEL-8948751">
    <property type="pathway name" value="Regulation of PTEN stability and activity"/>
</dbReference>
<dbReference type="Reactome" id="R-CEL-8951664">
    <property type="pathway name" value="Neddylation"/>
</dbReference>
<dbReference type="Reactome" id="R-CEL-9755511">
    <property type="pathway name" value="KEAP1-NFE2L2 pathway"/>
</dbReference>
<dbReference type="Reactome" id="R-CEL-9762114">
    <property type="pathway name" value="GSK3B and BTRC:CUL1-mediated-degradation of NFE2L2"/>
</dbReference>
<dbReference type="Reactome" id="R-CEL-983168">
    <property type="pathway name" value="Antigen processing: Ubiquitination &amp; Proteasome degradation"/>
</dbReference>
<dbReference type="Reactome" id="R-CEL-9907900">
    <property type="pathway name" value="Proteasome assembly"/>
</dbReference>
<dbReference type="CD-CODE" id="73A75392">
    <property type="entry name" value="P-granule"/>
</dbReference>
<dbReference type="PRO" id="PR:Q9XUV0"/>
<dbReference type="Proteomes" id="UP000001940">
    <property type="component" value="Chromosome I"/>
</dbReference>
<dbReference type="Bgee" id="WBGene00003951">
    <property type="expression patterns" value="Expressed in germ line (C elegans) and 4 other cell types or tissues"/>
</dbReference>
<dbReference type="GO" id="GO:0005829">
    <property type="term" value="C:cytosol"/>
    <property type="evidence" value="ECO:0000318"/>
    <property type="project" value="GO_Central"/>
</dbReference>
<dbReference type="GO" id="GO:0005634">
    <property type="term" value="C:nucleus"/>
    <property type="evidence" value="ECO:0000318"/>
    <property type="project" value="GO_Central"/>
</dbReference>
<dbReference type="GO" id="GO:0019774">
    <property type="term" value="C:proteasome core complex, beta-subunit complex"/>
    <property type="evidence" value="ECO:0000318"/>
    <property type="project" value="GO_Central"/>
</dbReference>
<dbReference type="GO" id="GO:0004175">
    <property type="term" value="F:endopeptidase activity"/>
    <property type="evidence" value="ECO:0000318"/>
    <property type="project" value="GO_Central"/>
</dbReference>
<dbReference type="GO" id="GO:0004298">
    <property type="term" value="F:threonine-type endopeptidase activity"/>
    <property type="evidence" value="ECO:0007669"/>
    <property type="project" value="UniProtKB-KW"/>
</dbReference>
<dbReference type="GO" id="GO:0043161">
    <property type="term" value="P:proteasome-mediated ubiquitin-dependent protein catabolic process"/>
    <property type="evidence" value="ECO:0000318"/>
    <property type="project" value="GO_Central"/>
</dbReference>
<dbReference type="FunFam" id="3.60.20.10:FF:000051">
    <property type="entry name" value="Proteasome subunit beta"/>
    <property type="match status" value="1"/>
</dbReference>
<dbReference type="Gene3D" id="3.60.20.10">
    <property type="entry name" value="Glutamine Phosphoribosylpyrophosphate, subunit 1, domain 1"/>
    <property type="match status" value="1"/>
</dbReference>
<dbReference type="InterPro" id="IPR029055">
    <property type="entry name" value="Ntn_hydrolases_N"/>
</dbReference>
<dbReference type="InterPro" id="IPR000243">
    <property type="entry name" value="Pept_T1A_subB"/>
</dbReference>
<dbReference type="InterPro" id="IPR001353">
    <property type="entry name" value="Proteasome_sua/b"/>
</dbReference>
<dbReference type="InterPro" id="IPR023333">
    <property type="entry name" value="Proteasome_suB-type"/>
</dbReference>
<dbReference type="PANTHER" id="PTHR32194">
    <property type="entry name" value="METALLOPROTEASE TLDD"/>
    <property type="match status" value="1"/>
</dbReference>
<dbReference type="PANTHER" id="PTHR32194:SF3">
    <property type="entry name" value="PROTEASOME SUBUNIT BETA"/>
    <property type="match status" value="1"/>
</dbReference>
<dbReference type="Pfam" id="PF00227">
    <property type="entry name" value="Proteasome"/>
    <property type="match status" value="1"/>
</dbReference>
<dbReference type="PRINTS" id="PR00141">
    <property type="entry name" value="PROTEASOME"/>
</dbReference>
<dbReference type="SUPFAM" id="SSF56235">
    <property type="entry name" value="N-terminal nucleophile aminohydrolases (Ntn hydrolases)"/>
    <property type="match status" value="1"/>
</dbReference>
<dbReference type="PROSITE" id="PS51476">
    <property type="entry name" value="PROTEASOME_BETA_2"/>
    <property type="match status" value="1"/>
</dbReference>
<reference evidence="5" key="1">
    <citation type="journal article" date="1998" name="Science">
        <title>Genome sequence of the nematode C. elegans: a platform for investigating biology.</title>
        <authorList>
            <consortium name="The C. elegans sequencing consortium"/>
        </authorList>
    </citation>
    <scope>NUCLEOTIDE SEQUENCE [LARGE SCALE GENOMIC DNA]</scope>
    <source>
        <strain evidence="5">Bristol N2</strain>
    </source>
</reference>
<reference evidence="4" key="2">
    <citation type="journal article" date="2016" name="Elife">
        <title>Proteasome dysfunction triggers activation of SKN-1A/Nrf1 by the aspartic protease DDI-1.</title>
        <authorList>
            <person name="Lehrbach N.J."/>
            <person name="Ruvkun G."/>
        </authorList>
    </citation>
    <scope>FUNCTION</scope>
    <scope>DISRUPTION PHENOTYPE</scope>
</reference>
<sequence length="284" mass="31230">MWGETFDDFENDEGEMAMAKQNLIAEPARADFTFAKLPLGIQPVDFMKTHFAETAGKSMQFRKGTTTLAFVYEPATPADKGGIIVAVDSRASSGEYISSKSVMKILDIGDRMVATMAGGAADCQFWTRIVAKYCTLYELREKTSITVSAASKYFANTLYGYRGQGLSVGSMVAGYDKKGPQIFKVDSEGDRCQLKVCSVGSGSLNAYGILDNHYKPKMTDDEARKLGLRAIMHATYRDSGSGGVCNLCHITPTEKIRLPPMDVSKLWYEFADELGRDITYNPVE</sequence>
<protein>
    <recommendedName>
        <fullName evidence="6">Proteasome subunit pbs-5</fullName>
        <ecNumber evidence="1">3.4.25.1</ecNumber>
    </recommendedName>
</protein>
<organism evidence="5">
    <name type="scientific">Caenorhabditis elegans</name>
    <dbReference type="NCBI Taxonomy" id="6239"/>
    <lineage>
        <taxon>Eukaryota</taxon>
        <taxon>Metazoa</taxon>
        <taxon>Ecdysozoa</taxon>
        <taxon>Nematoda</taxon>
        <taxon>Chromadorea</taxon>
        <taxon>Rhabditida</taxon>
        <taxon>Rhabditina</taxon>
        <taxon>Rhabditomorpha</taxon>
        <taxon>Rhabditoidea</taxon>
        <taxon>Rhabditidae</taxon>
        <taxon>Peloderinae</taxon>
        <taxon>Caenorhabditis</taxon>
    </lineage>
</organism>
<accession>Q9XUV0</accession>
<name>PBS5_CAEEL</name>